<accession>Q9TLX8</accession>
<organism>
    <name type="scientific">Cyanidium caldarium</name>
    <name type="common">Red alga</name>
    <dbReference type="NCBI Taxonomy" id="2771"/>
    <lineage>
        <taxon>Eukaryota</taxon>
        <taxon>Rhodophyta</taxon>
        <taxon>Bangiophyceae</taxon>
        <taxon>Cyanidiales</taxon>
        <taxon>Cyanidiaceae</taxon>
        <taxon>Cyanidium</taxon>
    </lineage>
</organism>
<comment type="function">
    <text evidence="1">IF-3 binds to the 30S ribosomal subunit and shifts the equilibrium between 70S ribosomes and their 50S and 30S subunits in favor of the free subunits, thus enhancing the availability of 30S subunits on which protein synthesis initiation begins.</text>
</comment>
<comment type="subunit">
    <text evidence="1">Monomer.</text>
</comment>
<comment type="subcellular location">
    <subcellularLocation>
        <location>Plastid</location>
        <location>Chloroplast</location>
    </subcellularLocation>
</comment>
<comment type="similarity">
    <text evidence="1">Belongs to the IF-3 family.</text>
</comment>
<gene>
    <name evidence="1" type="primary">infC</name>
</gene>
<proteinExistence type="inferred from homology"/>
<sequence>MLGGELLKYKSSKESHILINENINFPCVRVVDVTGKQLGILDTRQAVEYAKNQGVDLVLVNEISDPPVCKLIDYGKHKFIVEKRVKEGRKKQSGALVKEVKMTYKINEHDYETRLNQAFKFLKSGNKVKVTLTFKGREIQHLSLGTMLLNRLMTDLQQIAEVKRSPYQDGKTMILILTPKIVDPQ</sequence>
<protein>
    <recommendedName>
        <fullName evidence="1">Translation initiation factor IF-3, chloroplastic</fullName>
    </recommendedName>
</protein>
<evidence type="ECO:0000255" key="1">
    <source>
        <dbReference type="HAMAP-Rule" id="MF_00080"/>
    </source>
</evidence>
<dbReference type="EMBL" id="AF022186">
    <property type="protein sequence ID" value="AAF12954.1"/>
    <property type="molecule type" value="Genomic_DNA"/>
</dbReference>
<dbReference type="RefSeq" id="NP_045140.1">
    <property type="nucleotide sequence ID" value="NC_001840.1"/>
</dbReference>
<dbReference type="SMR" id="Q9TLX8"/>
<dbReference type="GeneID" id="800150"/>
<dbReference type="GO" id="GO:0009507">
    <property type="term" value="C:chloroplast"/>
    <property type="evidence" value="ECO:0007669"/>
    <property type="project" value="UniProtKB-SubCell"/>
</dbReference>
<dbReference type="GO" id="GO:0005829">
    <property type="term" value="C:cytosol"/>
    <property type="evidence" value="ECO:0007669"/>
    <property type="project" value="TreeGrafter"/>
</dbReference>
<dbReference type="GO" id="GO:0016020">
    <property type="term" value="C:membrane"/>
    <property type="evidence" value="ECO:0007669"/>
    <property type="project" value="TreeGrafter"/>
</dbReference>
<dbReference type="GO" id="GO:0043022">
    <property type="term" value="F:ribosome binding"/>
    <property type="evidence" value="ECO:0007669"/>
    <property type="project" value="TreeGrafter"/>
</dbReference>
<dbReference type="GO" id="GO:0003743">
    <property type="term" value="F:translation initiation factor activity"/>
    <property type="evidence" value="ECO:0007669"/>
    <property type="project" value="UniProtKB-UniRule"/>
</dbReference>
<dbReference type="GO" id="GO:0032790">
    <property type="term" value="P:ribosome disassembly"/>
    <property type="evidence" value="ECO:0007669"/>
    <property type="project" value="TreeGrafter"/>
</dbReference>
<dbReference type="FunFam" id="3.30.110.10:FF:000001">
    <property type="entry name" value="Translation initiation factor IF-3"/>
    <property type="match status" value="1"/>
</dbReference>
<dbReference type="Gene3D" id="3.30.110.10">
    <property type="entry name" value="Translation initiation factor 3 (IF-3), C-terminal domain"/>
    <property type="match status" value="1"/>
</dbReference>
<dbReference type="Gene3D" id="3.10.20.80">
    <property type="entry name" value="Translation initiation factor 3 (IF-3), N-terminal domain"/>
    <property type="match status" value="1"/>
</dbReference>
<dbReference type="HAMAP" id="MF_00080">
    <property type="entry name" value="IF_3"/>
    <property type="match status" value="1"/>
</dbReference>
<dbReference type="InterPro" id="IPR036788">
    <property type="entry name" value="T_IF-3_C_sf"/>
</dbReference>
<dbReference type="InterPro" id="IPR036787">
    <property type="entry name" value="T_IF-3_N_sf"/>
</dbReference>
<dbReference type="InterPro" id="IPR001288">
    <property type="entry name" value="Translation_initiation_fac_3"/>
</dbReference>
<dbReference type="InterPro" id="IPR019815">
    <property type="entry name" value="Translation_initiation_fac_3_C"/>
</dbReference>
<dbReference type="InterPro" id="IPR019814">
    <property type="entry name" value="Translation_initiation_fac_3_N"/>
</dbReference>
<dbReference type="NCBIfam" id="TIGR00168">
    <property type="entry name" value="infC"/>
    <property type="match status" value="1"/>
</dbReference>
<dbReference type="PANTHER" id="PTHR10938">
    <property type="entry name" value="TRANSLATION INITIATION FACTOR IF-3"/>
    <property type="match status" value="1"/>
</dbReference>
<dbReference type="PANTHER" id="PTHR10938:SF0">
    <property type="entry name" value="TRANSLATION INITIATION FACTOR IF-3, MITOCHONDRIAL"/>
    <property type="match status" value="1"/>
</dbReference>
<dbReference type="Pfam" id="PF00707">
    <property type="entry name" value="IF3_C"/>
    <property type="match status" value="1"/>
</dbReference>
<dbReference type="Pfam" id="PF05198">
    <property type="entry name" value="IF3_N"/>
    <property type="match status" value="1"/>
</dbReference>
<dbReference type="SUPFAM" id="SSF55200">
    <property type="entry name" value="Translation initiation factor IF3, C-terminal domain"/>
    <property type="match status" value="1"/>
</dbReference>
<dbReference type="SUPFAM" id="SSF54364">
    <property type="entry name" value="Translation initiation factor IF3, N-terminal domain"/>
    <property type="match status" value="1"/>
</dbReference>
<keyword id="KW-0150">Chloroplast</keyword>
<keyword id="KW-0396">Initiation factor</keyword>
<keyword id="KW-0934">Plastid</keyword>
<keyword id="KW-0648">Protein biosynthesis</keyword>
<geneLocation type="chloroplast"/>
<name>IF3C_CYACA</name>
<feature type="chain" id="PRO_0000177614" description="Translation initiation factor IF-3, chloroplastic">
    <location>
        <begin position="1"/>
        <end position="185"/>
    </location>
</feature>
<reference key="1">
    <citation type="journal article" date="2000" name="J. Mol. Evol.">
        <title>The structure and gene repertoire of an ancient red algal plastid genome.</title>
        <authorList>
            <person name="Gloeckner G."/>
            <person name="Rosenthal A."/>
            <person name="Valentin K.-U."/>
        </authorList>
    </citation>
    <scope>NUCLEOTIDE SEQUENCE [LARGE SCALE GENOMIC DNA]</scope>
    <source>
        <strain>RK-1</strain>
    </source>
</reference>